<sequence length="326" mass="34032">MRPELALVPGEPAGIGPELCVRLVQQPREDCRLLAFADPDTLRAAAAALNLPLQLLPEGAEARVPGDLRLRVVANATPSRFGQADPANAGAVIGALLGAGQACLSGELHGVVTGPVHKAVINEGGIAYSGTTELLADQAGVKVVMMLANHIVRVALATTHLPLREVADAITAPSLEHTLRTVHAALRREFGLPAPRIAVLGLNPHAGEDGHLGREELDLVIPLLQRLRAEGMDLIGPLPADTAFLPAKLAGFDTVLAMYHDQGLPVLKYSGFEQAVNLTLGLPYPRVAVDHGTALDLAGRGVADPSSLQAATTLCAQLARQRTLSA</sequence>
<protein>
    <recommendedName>
        <fullName evidence="1">4-hydroxythreonine-4-phosphate dehydrogenase</fullName>
        <ecNumber evidence="1">1.1.1.262</ecNumber>
    </recommendedName>
    <alternativeName>
        <fullName evidence="1">4-(phosphohydroxy)-L-threonine dehydrogenase</fullName>
    </alternativeName>
</protein>
<organism>
    <name type="scientific">Stenotrophomonas maltophilia (strain K279a)</name>
    <dbReference type="NCBI Taxonomy" id="522373"/>
    <lineage>
        <taxon>Bacteria</taxon>
        <taxon>Pseudomonadati</taxon>
        <taxon>Pseudomonadota</taxon>
        <taxon>Gammaproteobacteria</taxon>
        <taxon>Lysobacterales</taxon>
        <taxon>Lysobacteraceae</taxon>
        <taxon>Stenotrophomonas</taxon>
        <taxon>Stenotrophomonas maltophilia group</taxon>
    </lineage>
</organism>
<keyword id="KW-0170">Cobalt</keyword>
<keyword id="KW-0963">Cytoplasm</keyword>
<keyword id="KW-0460">Magnesium</keyword>
<keyword id="KW-0479">Metal-binding</keyword>
<keyword id="KW-0520">NAD</keyword>
<keyword id="KW-0521">NADP</keyword>
<keyword id="KW-0560">Oxidoreductase</keyword>
<keyword id="KW-0664">Pyridoxine biosynthesis</keyword>
<keyword id="KW-1185">Reference proteome</keyword>
<keyword id="KW-0862">Zinc</keyword>
<proteinExistence type="inferred from homology"/>
<accession>B2FPG6</accession>
<comment type="function">
    <text evidence="1">Catalyzes the NAD(P)-dependent oxidation of 4-(phosphooxy)-L-threonine (HTP) into 2-amino-3-oxo-4-(phosphooxy)butyric acid which spontaneously decarboxylates to form 3-amino-2-oxopropyl phosphate (AHAP).</text>
</comment>
<comment type="catalytic activity">
    <reaction evidence="1">
        <text>4-(phosphooxy)-L-threonine + NAD(+) = 3-amino-2-oxopropyl phosphate + CO2 + NADH</text>
        <dbReference type="Rhea" id="RHEA:32275"/>
        <dbReference type="ChEBI" id="CHEBI:16526"/>
        <dbReference type="ChEBI" id="CHEBI:57279"/>
        <dbReference type="ChEBI" id="CHEBI:57540"/>
        <dbReference type="ChEBI" id="CHEBI:57945"/>
        <dbReference type="ChEBI" id="CHEBI:58452"/>
        <dbReference type="EC" id="1.1.1.262"/>
    </reaction>
</comment>
<comment type="cofactor">
    <cofactor evidence="1">
        <name>Zn(2+)</name>
        <dbReference type="ChEBI" id="CHEBI:29105"/>
    </cofactor>
    <cofactor evidence="1">
        <name>Mg(2+)</name>
        <dbReference type="ChEBI" id="CHEBI:18420"/>
    </cofactor>
    <cofactor evidence="1">
        <name>Co(2+)</name>
        <dbReference type="ChEBI" id="CHEBI:48828"/>
    </cofactor>
    <text evidence="1">Binds 1 divalent metal cation per subunit. Can use ions such as Zn(2+), Mg(2+) or Co(2+).</text>
</comment>
<comment type="pathway">
    <text evidence="1">Cofactor biosynthesis; pyridoxine 5'-phosphate biosynthesis; pyridoxine 5'-phosphate from D-erythrose 4-phosphate: step 4/5.</text>
</comment>
<comment type="subunit">
    <text evidence="1">Homodimer.</text>
</comment>
<comment type="subcellular location">
    <subcellularLocation>
        <location evidence="1">Cytoplasm</location>
    </subcellularLocation>
</comment>
<comment type="miscellaneous">
    <text evidence="1">The active site is located at the dimer interface.</text>
</comment>
<comment type="similarity">
    <text evidence="1">Belongs to the PdxA family.</text>
</comment>
<dbReference type="EC" id="1.1.1.262" evidence="1"/>
<dbReference type="EMBL" id="AM743169">
    <property type="protein sequence ID" value="CAQ44395.1"/>
    <property type="molecule type" value="Genomic_DNA"/>
</dbReference>
<dbReference type="RefSeq" id="WP_005408140.1">
    <property type="nucleotide sequence ID" value="NC_010943.1"/>
</dbReference>
<dbReference type="SMR" id="B2FPG6"/>
<dbReference type="EnsemblBacteria" id="CAQ44395">
    <property type="protein sequence ID" value="CAQ44395"/>
    <property type="gene ID" value="Smlt0819"/>
</dbReference>
<dbReference type="KEGG" id="sml:Smlt0819"/>
<dbReference type="eggNOG" id="COG1995">
    <property type="taxonomic scope" value="Bacteria"/>
</dbReference>
<dbReference type="HOGENOM" id="CLU_040168_1_0_6"/>
<dbReference type="UniPathway" id="UPA00244">
    <property type="reaction ID" value="UER00312"/>
</dbReference>
<dbReference type="Proteomes" id="UP000008840">
    <property type="component" value="Chromosome"/>
</dbReference>
<dbReference type="GO" id="GO:0005737">
    <property type="term" value="C:cytoplasm"/>
    <property type="evidence" value="ECO:0007669"/>
    <property type="project" value="UniProtKB-SubCell"/>
</dbReference>
<dbReference type="GO" id="GO:0050570">
    <property type="term" value="F:4-hydroxythreonine-4-phosphate dehydrogenase activity"/>
    <property type="evidence" value="ECO:0007669"/>
    <property type="project" value="UniProtKB-UniRule"/>
</dbReference>
<dbReference type="GO" id="GO:0050897">
    <property type="term" value="F:cobalt ion binding"/>
    <property type="evidence" value="ECO:0007669"/>
    <property type="project" value="UniProtKB-UniRule"/>
</dbReference>
<dbReference type="GO" id="GO:0000287">
    <property type="term" value="F:magnesium ion binding"/>
    <property type="evidence" value="ECO:0007669"/>
    <property type="project" value="UniProtKB-UniRule"/>
</dbReference>
<dbReference type="GO" id="GO:0051287">
    <property type="term" value="F:NAD binding"/>
    <property type="evidence" value="ECO:0007669"/>
    <property type="project" value="InterPro"/>
</dbReference>
<dbReference type="GO" id="GO:0008270">
    <property type="term" value="F:zinc ion binding"/>
    <property type="evidence" value="ECO:0007669"/>
    <property type="project" value="UniProtKB-UniRule"/>
</dbReference>
<dbReference type="GO" id="GO:0042823">
    <property type="term" value="P:pyridoxal phosphate biosynthetic process"/>
    <property type="evidence" value="ECO:0007669"/>
    <property type="project" value="UniProtKB-UniRule"/>
</dbReference>
<dbReference type="GO" id="GO:0008615">
    <property type="term" value="P:pyridoxine biosynthetic process"/>
    <property type="evidence" value="ECO:0007669"/>
    <property type="project" value="UniProtKB-UniRule"/>
</dbReference>
<dbReference type="Gene3D" id="3.40.718.10">
    <property type="entry name" value="Isopropylmalate Dehydrogenase"/>
    <property type="match status" value="1"/>
</dbReference>
<dbReference type="HAMAP" id="MF_00536">
    <property type="entry name" value="PdxA"/>
    <property type="match status" value="1"/>
</dbReference>
<dbReference type="InterPro" id="IPR037510">
    <property type="entry name" value="PdxA"/>
</dbReference>
<dbReference type="InterPro" id="IPR005255">
    <property type="entry name" value="PdxA_fam"/>
</dbReference>
<dbReference type="NCBIfam" id="TIGR00557">
    <property type="entry name" value="pdxA"/>
    <property type="match status" value="1"/>
</dbReference>
<dbReference type="PANTHER" id="PTHR30004">
    <property type="entry name" value="4-HYDROXYTHREONINE-4-PHOSPHATE DEHYDROGENASE"/>
    <property type="match status" value="1"/>
</dbReference>
<dbReference type="PANTHER" id="PTHR30004:SF5">
    <property type="entry name" value="4-HYDROXYTHREONINE-4-PHOSPHATE DEHYDROGENASE"/>
    <property type="match status" value="1"/>
</dbReference>
<dbReference type="Pfam" id="PF04166">
    <property type="entry name" value="PdxA"/>
    <property type="match status" value="1"/>
</dbReference>
<dbReference type="SUPFAM" id="SSF53659">
    <property type="entry name" value="Isocitrate/Isopropylmalate dehydrogenase-like"/>
    <property type="match status" value="1"/>
</dbReference>
<gene>
    <name evidence="1" type="primary">pdxA</name>
    <name type="ordered locus">Smlt0819</name>
</gene>
<reference key="1">
    <citation type="journal article" date="2008" name="Genome Biol.">
        <title>The complete genome, comparative and functional analysis of Stenotrophomonas maltophilia reveals an organism heavily shielded by drug resistance determinants.</title>
        <authorList>
            <person name="Crossman L.C."/>
            <person name="Gould V.C."/>
            <person name="Dow J.M."/>
            <person name="Vernikos G.S."/>
            <person name="Okazaki A."/>
            <person name="Sebaihia M."/>
            <person name="Saunders D."/>
            <person name="Arrowsmith C."/>
            <person name="Carver T."/>
            <person name="Peters N."/>
            <person name="Adlem E."/>
            <person name="Kerhornou A."/>
            <person name="Lord A."/>
            <person name="Murphy L."/>
            <person name="Seeger K."/>
            <person name="Squares R."/>
            <person name="Rutter S."/>
            <person name="Quail M.A."/>
            <person name="Rajandream M.A."/>
            <person name="Harris D."/>
            <person name="Churcher C."/>
            <person name="Bentley S.D."/>
            <person name="Parkhill J."/>
            <person name="Thomson N.R."/>
            <person name="Avison M.B."/>
        </authorList>
    </citation>
    <scope>NUCLEOTIDE SEQUENCE [LARGE SCALE GENOMIC DNA]</scope>
    <source>
        <strain>K279a</strain>
    </source>
</reference>
<name>PDXA_STRMK</name>
<feature type="chain" id="PRO_1000128264" description="4-hydroxythreonine-4-phosphate dehydrogenase">
    <location>
        <begin position="1"/>
        <end position="326"/>
    </location>
</feature>
<feature type="binding site" evidence="1">
    <location>
        <position position="132"/>
    </location>
    <ligand>
        <name>substrate</name>
    </ligand>
</feature>
<feature type="binding site" evidence="1">
    <location>
        <position position="160"/>
    </location>
    <ligand>
        <name>a divalent metal cation</name>
        <dbReference type="ChEBI" id="CHEBI:60240"/>
        <note>ligand shared between dimeric partners</note>
    </ligand>
</feature>
<feature type="binding site" evidence="1">
    <location>
        <position position="205"/>
    </location>
    <ligand>
        <name>a divalent metal cation</name>
        <dbReference type="ChEBI" id="CHEBI:60240"/>
        <note>ligand shared between dimeric partners</note>
    </ligand>
</feature>
<feature type="binding site" evidence="1">
    <location>
        <position position="260"/>
    </location>
    <ligand>
        <name>a divalent metal cation</name>
        <dbReference type="ChEBI" id="CHEBI:60240"/>
        <note>ligand shared between dimeric partners</note>
    </ligand>
</feature>
<feature type="binding site" evidence="1">
    <location>
        <position position="268"/>
    </location>
    <ligand>
        <name>substrate</name>
    </ligand>
</feature>
<feature type="binding site" evidence="1">
    <location>
        <position position="277"/>
    </location>
    <ligand>
        <name>substrate</name>
    </ligand>
</feature>
<feature type="binding site" evidence="1">
    <location>
        <position position="286"/>
    </location>
    <ligand>
        <name>substrate</name>
    </ligand>
</feature>
<evidence type="ECO:0000255" key="1">
    <source>
        <dbReference type="HAMAP-Rule" id="MF_00536"/>
    </source>
</evidence>